<sequence length="552" mass="63726">MSETETRPTNFIRQIIDEDLKSGKHSSVHTRFPPEPNGYLHIGHAKSICLNFGIAQDYQGQCNLRFDDTNPEKEDIEYVESIKNDVKWLGFDWSGDIHYSSNYFDKLYDYAVELIEKGLAYVDELTSDQIREYRGSLKEPGKNSPYRDRSVEENLALFEQMRDGKFKEGTICLRAKIDMASSFIVMRDPVIYRIRFATHHQTGDKWCIYPMYDFTHCISDALEGITHSICTLEFQDNRRLYDWVLENITIDCQPHQYEFSRLNLEYTIMSKRKLNELVTEKLVNGWDDPRMPTVSGLRRRGFTAGSIREFCKRIGVTKQENMIEFGSLESCIRDDLNENAPRAMAVLEPVKVVIENYEEGKVETLNVANHPNKPEMGTREVPFTREIYIEQDDFREEANKKYKRLVLGKEVRLRGAYVIQANRIEKDEAGNITTIFCSYDTETLGKNPADGRKVKGVIHWVSADKAFPAEIRLYDRLFTVPNSAALEDFSESINPESLITKQGFVEPSLVTAEAEAGYQFERTGYFCIDNKDSTPEALVFNRTVGLRDTWEG</sequence>
<evidence type="ECO:0000255" key="1">
    <source>
        <dbReference type="HAMAP-Rule" id="MF_00126"/>
    </source>
</evidence>
<accession>B6EHL7</accession>
<comment type="catalytic activity">
    <reaction evidence="1">
        <text>tRNA(Gln) + L-glutamine + ATP = L-glutaminyl-tRNA(Gln) + AMP + diphosphate</text>
        <dbReference type="Rhea" id="RHEA:20121"/>
        <dbReference type="Rhea" id="RHEA-COMP:9662"/>
        <dbReference type="Rhea" id="RHEA-COMP:9681"/>
        <dbReference type="ChEBI" id="CHEBI:30616"/>
        <dbReference type="ChEBI" id="CHEBI:33019"/>
        <dbReference type="ChEBI" id="CHEBI:58359"/>
        <dbReference type="ChEBI" id="CHEBI:78442"/>
        <dbReference type="ChEBI" id="CHEBI:78521"/>
        <dbReference type="ChEBI" id="CHEBI:456215"/>
        <dbReference type="EC" id="6.1.1.18"/>
    </reaction>
</comment>
<comment type="subunit">
    <text evidence="1">Monomer.</text>
</comment>
<comment type="subcellular location">
    <subcellularLocation>
        <location evidence="1">Cytoplasm</location>
    </subcellularLocation>
</comment>
<comment type="similarity">
    <text evidence="1">Belongs to the class-I aminoacyl-tRNA synthetase family.</text>
</comment>
<gene>
    <name evidence="1" type="primary">glnS</name>
    <name type="ordered locus">VSAL_I0832</name>
</gene>
<protein>
    <recommendedName>
        <fullName evidence="1">Glutamine--tRNA ligase</fullName>
        <ecNumber evidence="1">6.1.1.18</ecNumber>
    </recommendedName>
    <alternativeName>
        <fullName evidence="1">Glutaminyl-tRNA synthetase</fullName>
        <shortName evidence="1">GlnRS</shortName>
    </alternativeName>
</protein>
<reference key="1">
    <citation type="journal article" date="2008" name="BMC Genomics">
        <title>The genome sequence of the fish pathogen Aliivibrio salmonicida strain LFI1238 shows extensive evidence of gene decay.</title>
        <authorList>
            <person name="Hjerde E."/>
            <person name="Lorentzen M.S."/>
            <person name="Holden M.T."/>
            <person name="Seeger K."/>
            <person name="Paulsen S."/>
            <person name="Bason N."/>
            <person name="Churcher C."/>
            <person name="Harris D."/>
            <person name="Norbertczak H."/>
            <person name="Quail M.A."/>
            <person name="Sanders S."/>
            <person name="Thurston S."/>
            <person name="Parkhill J."/>
            <person name="Willassen N.P."/>
            <person name="Thomson N.R."/>
        </authorList>
    </citation>
    <scope>NUCLEOTIDE SEQUENCE [LARGE SCALE GENOMIC DNA]</scope>
    <source>
        <strain>LFI1238</strain>
    </source>
</reference>
<keyword id="KW-0030">Aminoacyl-tRNA synthetase</keyword>
<keyword id="KW-0067">ATP-binding</keyword>
<keyword id="KW-0963">Cytoplasm</keyword>
<keyword id="KW-0436">Ligase</keyword>
<keyword id="KW-0547">Nucleotide-binding</keyword>
<keyword id="KW-0648">Protein biosynthesis</keyword>
<name>SYQ_ALISL</name>
<dbReference type="EC" id="6.1.1.18" evidence="1"/>
<dbReference type="EMBL" id="FM178379">
    <property type="protein sequence ID" value="CAQ78517.1"/>
    <property type="molecule type" value="Genomic_DNA"/>
</dbReference>
<dbReference type="RefSeq" id="WP_012549619.1">
    <property type="nucleotide sequence ID" value="NC_011312.1"/>
</dbReference>
<dbReference type="SMR" id="B6EHL7"/>
<dbReference type="KEGG" id="vsa:VSAL_I0832"/>
<dbReference type="eggNOG" id="COG0008">
    <property type="taxonomic scope" value="Bacteria"/>
</dbReference>
<dbReference type="HOGENOM" id="CLU_001882_2_3_6"/>
<dbReference type="Proteomes" id="UP000001730">
    <property type="component" value="Chromosome 1"/>
</dbReference>
<dbReference type="GO" id="GO:0005829">
    <property type="term" value="C:cytosol"/>
    <property type="evidence" value="ECO:0007669"/>
    <property type="project" value="TreeGrafter"/>
</dbReference>
<dbReference type="GO" id="GO:0005524">
    <property type="term" value="F:ATP binding"/>
    <property type="evidence" value="ECO:0007669"/>
    <property type="project" value="UniProtKB-UniRule"/>
</dbReference>
<dbReference type="GO" id="GO:0004819">
    <property type="term" value="F:glutamine-tRNA ligase activity"/>
    <property type="evidence" value="ECO:0007669"/>
    <property type="project" value="UniProtKB-UniRule"/>
</dbReference>
<dbReference type="GO" id="GO:0006425">
    <property type="term" value="P:glutaminyl-tRNA aminoacylation"/>
    <property type="evidence" value="ECO:0007669"/>
    <property type="project" value="InterPro"/>
</dbReference>
<dbReference type="GO" id="GO:0006424">
    <property type="term" value="P:glutamyl-tRNA aminoacylation"/>
    <property type="evidence" value="ECO:0007669"/>
    <property type="project" value="UniProtKB-UniRule"/>
</dbReference>
<dbReference type="CDD" id="cd00807">
    <property type="entry name" value="GlnRS_core"/>
    <property type="match status" value="1"/>
</dbReference>
<dbReference type="FunFam" id="2.40.240.10:FF:000001">
    <property type="entry name" value="Glutamine--tRNA ligase"/>
    <property type="match status" value="1"/>
</dbReference>
<dbReference type="FunFam" id="2.40.240.10:FF:000003">
    <property type="entry name" value="Glutamine--tRNA ligase"/>
    <property type="match status" value="1"/>
</dbReference>
<dbReference type="FunFam" id="3.40.50.620:FF:000037">
    <property type="entry name" value="Glutamine--tRNA ligase cytoplasmic"/>
    <property type="match status" value="1"/>
</dbReference>
<dbReference type="Gene3D" id="3.40.50.620">
    <property type="entry name" value="HUPs"/>
    <property type="match status" value="1"/>
</dbReference>
<dbReference type="Gene3D" id="2.40.240.10">
    <property type="entry name" value="Ribosomal Protein L25, Chain P"/>
    <property type="match status" value="2"/>
</dbReference>
<dbReference type="HAMAP" id="MF_00126">
    <property type="entry name" value="Gln_tRNA_synth"/>
    <property type="match status" value="1"/>
</dbReference>
<dbReference type="InterPro" id="IPR001412">
    <property type="entry name" value="aa-tRNA-synth_I_CS"/>
</dbReference>
<dbReference type="InterPro" id="IPR004514">
    <property type="entry name" value="Gln-tRNA-synth"/>
</dbReference>
<dbReference type="InterPro" id="IPR050132">
    <property type="entry name" value="Gln/Glu-tRNA_Ligase"/>
</dbReference>
<dbReference type="InterPro" id="IPR022861">
    <property type="entry name" value="Gln_tRNA_ligase_bac"/>
</dbReference>
<dbReference type="InterPro" id="IPR000924">
    <property type="entry name" value="Glu/Gln-tRNA-synth"/>
</dbReference>
<dbReference type="InterPro" id="IPR020058">
    <property type="entry name" value="Glu/Gln-tRNA-synth_Ib_cat-dom"/>
</dbReference>
<dbReference type="InterPro" id="IPR020059">
    <property type="entry name" value="Glu/Gln-tRNA-synth_Ib_codon-bd"/>
</dbReference>
<dbReference type="InterPro" id="IPR020056">
    <property type="entry name" value="Rbsml_bL25/Gln-tRNA_synth_N"/>
</dbReference>
<dbReference type="InterPro" id="IPR011035">
    <property type="entry name" value="Ribosomal_bL25/Gln-tRNA_synth"/>
</dbReference>
<dbReference type="InterPro" id="IPR014729">
    <property type="entry name" value="Rossmann-like_a/b/a_fold"/>
</dbReference>
<dbReference type="InterPro" id="IPR049437">
    <property type="entry name" value="tRNA-synt_1c_C2"/>
</dbReference>
<dbReference type="NCBIfam" id="TIGR00440">
    <property type="entry name" value="glnS"/>
    <property type="match status" value="1"/>
</dbReference>
<dbReference type="NCBIfam" id="NF011291">
    <property type="entry name" value="PRK14703.1"/>
    <property type="match status" value="1"/>
</dbReference>
<dbReference type="PANTHER" id="PTHR43097:SF5">
    <property type="entry name" value="GLUTAMATE--TRNA LIGASE"/>
    <property type="match status" value="1"/>
</dbReference>
<dbReference type="PANTHER" id="PTHR43097">
    <property type="entry name" value="GLUTAMINE-TRNA LIGASE"/>
    <property type="match status" value="1"/>
</dbReference>
<dbReference type="Pfam" id="PF00749">
    <property type="entry name" value="tRNA-synt_1c"/>
    <property type="match status" value="1"/>
</dbReference>
<dbReference type="Pfam" id="PF03950">
    <property type="entry name" value="tRNA-synt_1c_C"/>
    <property type="match status" value="1"/>
</dbReference>
<dbReference type="Pfam" id="PF20974">
    <property type="entry name" value="tRNA-synt_1c_C2"/>
    <property type="match status" value="1"/>
</dbReference>
<dbReference type="PRINTS" id="PR00987">
    <property type="entry name" value="TRNASYNTHGLU"/>
</dbReference>
<dbReference type="SUPFAM" id="SSF52374">
    <property type="entry name" value="Nucleotidylyl transferase"/>
    <property type="match status" value="1"/>
</dbReference>
<dbReference type="SUPFAM" id="SSF50715">
    <property type="entry name" value="Ribosomal protein L25-like"/>
    <property type="match status" value="1"/>
</dbReference>
<dbReference type="PROSITE" id="PS00178">
    <property type="entry name" value="AA_TRNA_LIGASE_I"/>
    <property type="match status" value="1"/>
</dbReference>
<feature type="chain" id="PRO_1000095476" description="Glutamine--tRNA ligase">
    <location>
        <begin position="1"/>
        <end position="552"/>
    </location>
</feature>
<feature type="short sequence motif" description="'HIGH' region" evidence="1">
    <location>
        <begin position="34"/>
        <end position="44"/>
    </location>
</feature>
<feature type="short sequence motif" description="'KMSKS' region" evidence="1">
    <location>
        <begin position="268"/>
        <end position="272"/>
    </location>
</feature>
<feature type="binding site" evidence="1">
    <location>
        <begin position="35"/>
        <end position="37"/>
    </location>
    <ligand>
        <name>ATP</name>
        <dbReference type="ChEBI" id="CHEBI:30616"/>
    </ligand>
</feature>
<feature type="binding site" evidence="1">
    <location>
        <begin position="41"/>
        <end position="47"/>
    </location>
    <ligand>
        <name>ATP</name>
        <dbReference type="ChEBI" id="CHEBI:30616"/>
    </ligand>
</feature>
<feature type="binding site" evidence="1">
    <location>
        <position position="67"/>
    </location>
    <ligand>
        <name>L-glutamine</name>
        <dbReference type="ChEBI" id="CHEBI:58359"/>
    </ligand>
</feature>
<feature type="binding site" evidence="1">
    <location>
        <position position="212"/>
    </location>
    <ligand>
        <name>L-glutamine</name>
        <dbReference type="ChEBI" id="CHEBI:58359"/>
    </ligand>
</feature>
<feature type="binding site" evidence="1">
    <location>
        <position position="231"/>
    </location>
    <ligand>
        <name>ATP</name>
        <dbReference type="ChEBI" id="CHEBI:30616"/>
    </ligand>
</feature>
<feature type="binding site" evidence="1">
    <location>
        <begin position="261"/>
        <end position="262"/>
    </location>
    <ligand>
        <name>ATP</name>
        <dbReference type="ChEBI" id="CHEBI:30616"/>
    </ligand>
</feature>
<feature type="binding site" evidence="1">
    <location>
        <begin position="269"/>
        <end position="271"/>
    </location>
    <ligand>
        <name>ATP</name>
        <dbReference type="ChEBI" id="CHEBI:30616"/>
    </ligand>
</feature>
<proteinExistence type="inferred from homology"/>
<organism>
    <name type="scientific">Aliivibrio salmonicida (strain LFI1238)</name>
    <name type="common">Vibrio salmonicida (strain LFI1238)</name>
    <dbReference type="NCBI Taxonomy" id="316275"/>
    <lineage>
        <taxon>Bacteria</taxon>
        <taxon>Pseudomonadati</taxon>
        <taxon>Pseudomonadota</taxon>
        <taxon>Gammaproteobacteria</taxon>
        <taxon>Vibrionales</taxon>
        <taxon>Vibrionaceae</taxon>
        <taxon>Aliivibrio</taxon>
    </lineage>
</organism>